<proteinExistence type="inferred from homology"/>
<keyword id="KW-0028">Amino-acid biosynthesis</keyword>
<keyword id="KW-0055">Arginine biosynthesis</keyword>
<keyword id="KW-0067">ATP-binding</keyword>
<keyword id="KW-0963">Cytoplasm</keyword>
<keyword id="KW-0436">Ligase</keyword>
<keyword id="KW-0547">Nucleotide-binding</keyword>
<keyword id="KW-1185">Reference proteome</keyword>
<comment type="catalytic activity">
    <reaction evidence="1">
        <text>L-citrulline + L-aspartate + ATP = 2-(N(omega)-L-arginino)succinate + AMP + diphosphate + H(+)</text>
        <dbReference type="Rhea" id="RHEA:10932"/>
        <dbReference type="ChEBI" id="CHEBI:15378"/>
        <dbReference type="ChEBI" id="CHEBI:29991"/>
        <dbReference type="ChEBI" id="CHEBI:30616"/>
        <dbReference type="ChEBI" id="CHEBI:33019"/>
        <dbReference type="ChEBI" id="CHEBI:57472"/>
        <dbReference type="ChEBI" id="CHEBI:57743"/>
        <dbReference type="ChEBI" id="CHEBI:456215"/>
        <dbReference type="EC" id="6.3.4.5"/>
    </reaction>
</comment>
<comment type="pathway">
    <text evidence="1">Amino-acid biosynthesis; L-arginine biosynthesis; L-arginine from L-ornithine and carbamoyl phosphate: step 2/3.</text>
</comment>
<comment type="subunit">
    <text evidence="1">Homotetramer.</text>
</comment>
<comment type="subcellular location">
    <subcellularLocation>
        <location evidence="1">Cytoplasm</location>
    </subcellularLocation>
</comment>
<comment type="similarity">
    <text evidence="1">Belongs to the argininosuccinate synthase family. Type 1 subfamily.</text>
</comment>
<reference key="1">
    <citation type="submission" date="2007-02" db="EMBL/GenBank/DDBJ databases">
        <title>Complete sequence of chromosome of Shewanella baltica OS155.</title>
        <authorList>
            <consortium name="US DOE Joint Genome Institute"/>
            <person name="Copeland A."/>
            <person name="Lucas S."/>
            <person name="Lapidus A."/>
            <person name="Barry K."/>
            <person name="Detter J.C."/>
            <person name="Glavina del Rio T."/>
            <person name="Hammon N."/>
            <person name="Israni S."/>
            <person name="Dalin E."/>
            <person name="Tice H."/>
            <person name="Pitluck S."/>
            <person name="Sims D.R."/>
            <person name="Brettin T."/>
            <person name="Bruce D."/>
            <person name="Han C."/>
            <person name="Tapia R."/>
            <person name="Brainard J."/>
            <person name="Schmutz J."/>
            <person name="Larimer F."/>
            <person name="Land M."/>
            <person name="Hauser L."/>
            <person name="Kyrpides N."/>
            <person name="Mikhailova N."/>
            <person name="Brettar I."/>
            <person name="Klappenbach J."/>
            <person name="Konstantinidis K."/>
            <person name="Rodrigues J."/>
            <person name="Tiedje J."/>
            <person name="Richardson P."/>
        </authorList>
    </citation>
    <scope>NUCLEOTIDE SEQUENCE [LARGE SCALE GENOMIC DNA]</scope>
    <source>
        <strain>OS155 / ATCC BAA-1091</strain>
    </source>
</reference>
<protein>
    <recommendedName>
        <fullName evidence="1">Argininosuccinate synthase</fullName>
        <ecNumber evidence="1">6.3.4.5</ecNumber>
    </recommendedName>
    <alternativeName>
        <fullName evidence="1">Citrulline--aspartate ligase</fullName>
    </alternativeName>
</protein>
<gene>
    <name evidence="1" type="primary">argG</name>
    <name type="ordered locus">Sbal_4121</name>
</gene>
<dbReference type="EC" id="6.3.4.5" evidence="1"/>
<dbReference type="EMBL" id="CP000563">
    <property type="protein sequence ID" value="ABN63586.1"/>
    <property type="molecule type" value="Genomic_DNA"/>
</dbReference>
<dbReference type="RefSeq" id="WP_006083550.1">
    <property type="nucleotide sequence ID" value="NC_009052.1"/>
</dbReference>
<dbReference type="SMR" id="A3DA23"/>
<dbReference type="STRING" id="325240.Sbal_4121"/>
<dbReference type="KEGG" id="sbl:Sbal_4121"/>
<dbReference type="HOGENOM" id="CLU_032784_4_2_6"/>
<dbReference type="OrthoDB" id="9801641at2"/>
<dbReference type="UniPathway" id="UPA00068">
    <property type="reaction ID" value="UER00113"/>
</dbReference>
<dbReference type="Proteomes" id="UP000001557">
    <property type="component" value="Chromosome"/>
</dbReference>
<dbReference type="GO" id="GO:0005737">
    <property type="term" value="C:cytoplasm"/>
    <property type="evidence" value="ECO:0007669"/>
    <property type="project" value="UniProtKB-SubCell"/>
</dbReference>
<dbReference type="GO" id="GO:0004055">
    <property type="term" value="F:argininosuccinate synthase activity"/>
    <property type="evidence" value="ECO:0007669"/>
    <property type="project" value="UniProtKB-UniRule"/>
</dbReference>
<dbReference type="GO" id="GO:0005524">
    <property type="term" value="F:ATP binding"/>
    <property type="evidence" value="ECO:0007669"/>
    <property type="project" value="UniProtKB-UniRule"/>
</dbReference>
<dbReference type="GO" id="GO:0000053">
    <property type="term" value="P:argininosuccinate metabolic process"/>
    <property type="evidence" value="ECO:0007669"/>
    <property type="project" value="TreeGrafter"/>
</dbReference>
<dbReference type="GO" id="GO:0006526">
    <property type="term" value="P:L-arginine biosynthetic process"/>
    <property type="evidence" value="ECO:0007669"/>
    <property type="project" value="UniProtKB-UniRule"/>
</dbReference>
<dbReference type="GO" id="GO:0000050">
    <property type="term" value="P:urea cycle"/>
    <property type="evidence" value="ECO:0007669"/>
    <property type="project" value="TreeGrafter"/>
</dbReference>
<dbReference type="CDD" id="cd01999">
    <property type="entry name" value="ASS"/>
    <property type="match status" value="1"/>
</dbReference>
<dbReference type="FunFam" id="1.20.5.470:FF:000005">
    <property type="entry name" value="Argininosuccinate synthase"/>
    <property type="match status" value="1"/>
</dbReference>
<dbReference type="FunFam" id="3.40.50.620:FF:000019">
    <property type="entry name" value="Argininosuccinate synthase"/>
    <property type="match status" value="1"/>
</dbReference>
<dbReference type="FunFam" id="3.90.1260.10:FF:000007">
    <property type="entry name" value="Argininosuccinate synthase"/>
    <property type="match status" value="1"/>
</dbReference>
<dbReference type="Gene3D" id="3.90.1260.10">
    <property type="entry name" value="Argininosuccinate synthetase, chain A, domain 2"/>
    <property type="match status" value="1"/>
</dbReference>
<dbReference type="Gene3D" id="3.40.50.620">
    <property type="entry name" value="HUPs"/>
    <property type="match status" value="1"/>
</dbReference>
<dbReference type="Gene3D" id="1.20.5.470">
    <property type="entry name" value="Single helix bin"/>
    <property type="match status" value="1"/>
</dbReference>
<dbReference type="HAMAP" id="MF_00005">
    <property type="entry name" value="Arg_succ_synth_type1"/>
    <property type="match status" value="1"/>
</dbReference>
<dbReference type="InterPro" id="IPR048268">
    <property type="entry name" value="Arginosuc_syn_C"/>
</dbReference>
<dbReference type="InterPro" id="IPR048267">
    <property type="entry name" value="Arginosuc_syn_N"/>
</dbReference>
<dbReference type="InterPro" id="IPR001518">
    <property type="entry name" value="Arginosuc_synth"/>
</dbReference>
<dbReference type="InterPro" id="IPR018223">
    <property type="entry name" value="Arginosuc_synth_CS"/>
</dbReference>
<dbReference type="InterPro" id="IPR023434">
    <property type="entry name" value="Arginosuc_synth_type_1_subfam"/>
</dbReference>
<dbReference type="InterPro" id="IPR024074">
    <property type="entry name" value="AS_cat/multimer_dom_body"/>
</dbReference>
<dbReference type="InterPro" id="IPR014729">
    <property type="entry name" value="Rossmann-like_a/b/a_fold"/>
</dbReference>
<dbReference type="NCBIfam" id="TIGR00032">
    <property type="entry name" value="argG"/>
    <property type="match status" value="1"/>
</dbReference>
<dbReference type="NCBIfam" id="NF001770">
    <property type="entry name" value="PRK00509.1"/>
    <property type="match status" value="1"/>
</dbReference>
<dbReference type="PANTHER" id="PTHR11587">
    <property type="entry name" value="ARGININOSUCCINATE SYNTHASE"/>
    <property type="match status" value="1"/>
</dbReference>
<dbReference type="PANTHER" id="PTHR11587:SF2">
    <property type="entry name" value="ARGININOSUCCINATE SYNTHASE"/>
    <property type="match status" value="1"/>
</dbReference>
<dbReference type="Pfam" id="PF20979">
    <property type="entry name" value="Arginosuc_syn_C"/>
    <property type="match status" value="1"/>
</dbReference>
<dbReference type="Pfam" id="PF00764">
    <property type="entry name" value="Arginosuc_synth"/>
    <property type="match status" value="1"/>
</dbReference>
<dbReference type="SUPFAM" id="SSF52402">
    <property type="entry name" value="Adenine nucleotide alpha hydrolases-like"/>
    <property type="match status" value="1"/>
</dbReference>
<dbReference type="SUPFAM" id="SSF69864">
    <property type="entry name" value="Argininosuccinate synthetase, C-terminal domain"/>
    <property type="match status" value="1"/>
</dbReference>
<dbReference type="PROSITE" id="PS00564">
    <property type="entry name" value="ARGININOSUCCIN_SYN_1"/>
    <property type="match status" value="1"/>
</dbReference>
<dbReference type="PROSITE" id="PS00565">
    <property type="entry name" value="ARGININOSUCCIN_SYN_2"/>
    <property type="match status" value="1"/>
</dbReference>
<name>ASSY_SHEB5</name>
<accession>A3DA23</accession>
<evidence type="ECO:0000255" key="1">
    <source>
        <dbReference type="HAMAP-Rule" id="MF_00005"/>
    </source>
</evidence>
<sequence>MSIEIKNTGVKKVVLAYSGGLDTSAIIPWLKENYDNCEIIAFCADVGQGEEELVGLTEKALASGASECHIVDLKEEFVKEYIYPTIASGAIYEGTYLLGTSMARPIIAKAQVEVARKVGADALCHGCTGKGNDQVRFEGCFAALAPDLKVIAPWREWTMQSREDLLAYLAERDIKTSASATKIYSRDANAFHISHEGGELEDPWNEPSKGVWTLTADPEDAPNKPEYVSLEVEHGRITKVNGEALTPYAALMTLNAIAAPHGVGRIDITENRLVGMKSRGCYETPGGTVMFAALRAIEELVLDKTSRNWREQVAAQMAHLVYDGRWFTPLCKSLLAASESLAESVNGEVVVKLYKGQATAVKKRSPNSLYSEAFATFGEDQVYDQKHAEGFIRLYSLASRIRALNANDVKSK</sequence>
<organism>
    <name type="scientific">Shewanella baltica (strain OS155 / ATCC BAA-1091)</name>
    <dbReference type="NCBI Taxonomy" id="325240"/>
    <lineage>
        <taxon>Bacteria</taxon>
        <taxon>Pseudomonadati</taxon>
        <taxon>Pseudomonadota</taxon>
        <taxon>Gammaproteobacteria</taxon>
        <taxon>Alteromonadales</taxon>
        <taxon>Shewanellaceae</taxon>
        <taxon>Shewanella</taxon>
    </lineage>
</organism>
<feature type="chain" id="PRO_1000000431" description="Argininosuccinate synthase">
    <location>
        <begin position="1"/>
        <end position="412"/>
    </location>
</feature>
<feature type="binding site" evidence="1">
    <location>
        <begin position="16"/>
        <end position="24"/>
    </location>
    <ligand>
        <name>ATP</name>
        <dbReference type="ChEBI" id="CHEBI:30616"/>
    </ligand>
</feature>
<feature type="binding site" evidence="1">
    <location>
        <position position="44"/>
    </location>
    <ligand>
        <name>ATP</name>
        <dbReference type="ChEBI" id="CHEBI:30616"/>
    </ligand>
</feature>
<feature type="binding site" evidence="1">
    <location>
        <position position="96"/>
    </location>
    <ligand>
        <name>L-citrulline</name>
        <dbReference type="ChEBI" id="CHEBI:57743"/>
    </ligand>
</feature>
<feature type="binding site" evidence="1">
    <location>
        <position position="101"/>
    </location>
    <ligand>
        <name>L-citrulline</name>
        <dbReference type="ChEBI" id="CHEBI:57743"/>
    </ligand>
</feature>
<feature type="binding site" evidence="1">
    <location>
        <position position="126"/>
    </location>
    <ligand>
        <name>ATP</name>
        <dbReference type="ChEBI" id="CHEBI:30616"/>
    </ligand>
</feature>
<feature type="binding site" evidence="1">
    <location>
        <position position="128"/>
    </location>
    <ligand>
        <name>L-aspartate</name>
        <dbReference type="ChEBI" id="CHEBI:29991"/>
    </ligand>
</feature>
<feature type="binding site" evidence="1">
    <location>
        <position position="132"/>
    </location>
    <ligand>
        <name>L-aspartate</name>
        <dbReference type="ChEBI" id="CHEBI:29991"/>
    </ligand>
</feature>
<feature type="binding site" evidence="1">
    <location>
        <position position="132"/>
    </location>
    <ligand>
        <name>L-citrulline</name>
        <dbReference type="ChEBI" id="CHEBI:57743"/>
    </ligand>
</feature>
<feature type="binding site" evidence="1">
    <location>
        <position position="133"/>
    </location>
    <ligand>
        <name>L-aspartate</name>
        <dbReference type="ChEBI" id="CHEBI:29991"/>
    </ligand>
</feature>
<feature type="binding site" evidence="1">
    <location>
        <position position="136"/>
    </location>
    <ligand>
        <name>L-citrulline</name>
        <dbReference type="ChEBI" id="CHEBI:57743"/>
    </ligand>
</feature>
<feature type="binding site" evidence="1">
    <location>
        <position position="185"/>
    </location>
    <ligand>
        <name>L-citrulline</name>
        <dbReference type="ChEBI" id="CHEBI:57743"/>
    </ligand>
</feature>
<feature type="binding site" evidence="1">
    <location>
        <position position="194"/>
    </location>
    <ligand>
        <name>L-citrulline</name>
        <dbReference type="ChEBI" id="CHEBI:57743"/>
    </ligand>
</feature>
<feature type="binding site" evidence="1">
    <location>
        <position position="270"/>
    </location>
    <ligand>
        <name>L-citrulline</name>
        <dbReference type="ChEBI" id="CHEBI:57743"/>
    </ligand>
</feature>
<feature type="binding site" evidence="1">
    <location>
        <position position="282"/>
    </location>
    <ligand>
        <name>L-citrulline</name>
        <dbReference type="ChEBI" id="CHEBI:57743"/>
    </ligand>
</feature>